<protein>
    <recommendedName>
        <fullName evidence="1">Chromosome partition protein Smc</fullName>
    </recommendedName>
</protein>
<comment type="function">
    <text evidence="1">Required for chromosome condensation and partitioning.</text>
</comment>
<comment type="subunit">
    <text evidence="1">Homodimer.</text>
</comment>
<comment type="subcellular location">
    <subcellularLocation>
        <location evidence="1">Cytoplasm</location>
    </subcellularLocation>
</comment>
<comment type="domain">
    <text evidence="1">Contains large globular domains required for ATP hydrolysis at each terminus and a third globular domain forming a flexible SMC hinge near the middle of the molecule. These domains are separated by coiled-coil structures.</text>
</comment>
<comment type="similarity">
    <text evidence="1">Belongs to the SMC family.</text>
</comment>
<sequence>MYLKSLTLKGFKSFAAPTTLRFEPGITAVVGPNGSGKSNVVDALAWVMGEQGAKTLRGGKMEDVIFAGTSSRAPLGRAEVTVSIDNSDNALPIEYTEVSITRRMFRDGASEYEINGSSCRLMDVQELLSDSGIGREMHVIVGQGKLEEILQSRPEDRRAFIEEAAGVLKHRKRKEKALRKLDTMAANLARLTDLTTELRRQLKPLGRQAEAAQRAAAIQADLRDARLRLAADDLVSRRAEREAVFQAEAAMRREHDEAAARLAVASEELAAHESAVAELSTRAESIQHTWFGLSALAERVDATVRIASERAHHLDIEPVAVSDTDPRKPEELEAEAQQVAVAEQQLLAELDAARARLDAARAELADRERRAAEADRAHLAAVREEADRREGLARLAGQVETMRARVESIDESVARLSERIEDAAMRAQQTRAEFETVQGRIGELDQGEVGLDEHHERTVAALRLADERVAELQSAERAAERQVASLRARIDALAVGLQRKDGAAWLAHNRSGAGLFGSIAQLVKVRSGYEAALAAALGPAADALAVDGLTAAGSAVSALKQADGGRAVLVLSDWPAPQAPQSASGEMLPSGAQWALDLVESPPQLVGAMIAMLSGVAVVNDLTEAMGLVEIRPELRAVTVDGDLVGAGWVSGGSDRKLSTLEVTSEIDKARSELAAAEALAAQLNAALAGALTEQSARQDAAEQALAALNESDTAISAMYEQLGRLGQEARAAEEEWNRLLQQRTEQEAVRTQTLDDVIQLETQLRKAQETQRVQVAQPIDRQAISAAADRARGVEVEARLAVRTAEERANAVRGRADSLRRAAAAEREARVRAQQARAARLHAAAVAAAVADCGRLLAGRLHRAVDGASQLRDASAAQRQQRLAAMAAVRDEVNTLSARVGELTDSLHRDELANAQAALRIEQLEQMVLEQFGMAPADLITEYGPHVALPPTELEMAEFEQARERGEQVIAPAPMPFDRVTQERRAKRAERALAELGRVNPLALEEFAALEERYNFLSTQLEDVKAARKDLLGVVADVDARILQVFNDAFVDVEREFRGVFTALFPGGEGRLRLTEPDDMLTTGIEVEARPPGKKITRLSLLSGGEKALTAVAMLVAIFRARPSPFYIMDEVEAALDDVNLRRLLSLFEQLREQSQIIIITHQKPTMEVADALYGVTMQNDGITAVISQRMRGQQVDQLVTNSS</sequence>
<proteinExistence type="evidence at protein level"/>
<evidence type="ECO:0000255" key="1">
    <source>
        <dbReference type="HAMAP-Rule" id="MF_01894"/>
    </source>
</evidence>
<name>SMC_MYCTU</name>
<dbReference type="EMBL" id="AJ414609">
    <property type="protein sequence ID" value="CAC93884.1"/>
    <property type="molecule type" value="Genomic_DNA"/>
</dbReference>
<dbReference type="EMBL" id="AL123456">
    <property type="protein sequence ID" value="CCP45724.1"/>
    <property type="molecule type" value="Genomic_DNA"/>
</dbReference>
<dbReference type="PIR" id="B70748">
    <property type="entry name" value="B70748"/>
</dbReference>
<dbReference type="RefSeq" id="NP_217438.2">
    <property type="nucleotide sequence ID" value="NC_000962.3"/>
</dbReference>
<dbReference type="RefSeq" id="WP_003899542.1">
    <property type="nucleotide sequence ID" value="NZ_NVQJ01000006.1"/>
</dbReference>
<dbReference type="SMR" id="P9WGF3"/>
<dbReference type="FunCoup" id="P9WGF3">
    <property type="interactions" value="299"/>
</dbReference>
<dbReference type="STRING" id="83332.Rv2922c"/>
<dbReference type="PaxDb" id="83332-Rv2922c"/>
<dbReference type="GeneID" id="887179"/>
<dbReference type="KEGG" id="mtu:Rv2922c"/>
<dbReference type="KEGG" id="mtv:RVBD_2922c"/>
<dbReference type="TubercuList" id="Rv2922c"/>
<dbReference type="eggNOG" id="COG1196">
    <property type="taxonomic scope" value="Bacteria"/>
</dbReference>
<dbReference type="InParanoid" id="P9WGF3"/>
<dbReference type="OrthoDB" id="9808768at2"/>
<dbReference type="PhylomeDB" id="P9WGF3"/>
<dbReference type="Proteomes" id="UP000001584">
    <property type="component" value="Chromosome"/>
</dbReference>
<dbReference type="GO" id="GO:0005694">
    <property type="term" value="C:chromosome"/>
    <property type="evidence" value="ECO:0007669"/>
    <property type="project" value="InterPro"/>
</dbReference>
<dbReference type="GO" id="GO:0005829">
    <property type="term" value="C:cytosol"/>
    <property type="evidence" value="ECO:0007005"/>
    <property type="project" value="MTBBASE"/>
</dbReference>
<dbReference type="GO" id="GO:0009274">
    <property type="term" value="C:peptidoglycan-based cell wall"/>
    <property type="evidence" value="ECO:0007005"/>
    <property type="project" value="MTBBASE"/>
</dbReference>
<dbReference type="GO" id="GO:0005886">
    <property type="term" value="C:plasma membrane"/>
    <property type="evidence" value="ECO:0007005"/>
    <property type="project" value="MTBBASE"/>
</dbReference>
<dbReference type="GO" id="GO:0005524">
    <property type="term" value="F:ATP binding"/>
    <property type="evidence" value="ECO:0007669"/>
    <property type="project" value="UniProtKB-UniRule"/>
</dbReference>
<dbReference type="GO" id="GO:0016887">
    <property type="term" value="F:ATP hydrolysis activity"/>
    <property type="evidence" value="ECO:0007669"/>
    <property type="project" value="InterPro"/>
</dbReference>
<dbReference type="GO" id="GO:0003677">
    <property type="term" value="F:DNA binding"/>
    <property type="evidence" value="ECO:0007669"/>
    <property type="project" value="UniProtKB-UniRule"/>
</dbReference>
<dbReference type="GO" id="GO:0030261">
    <property type="term" value="P:chromosome condensation"/>
    <property type="evidence" value="ECO:0007669"/>
    <property type="project" value="InterPro"/>
</dbReference>
<dbReference type="GO" id="GO:0007059">
    <property type="term" value="P:chromosome segregation"/>
    <property type="evidence" value="ECO:0007669"/>
    <property type="project" value="UniProtKB-UniRule"/>
</dbReference>
<dbReference type="GO" id="GO:0006260">
    <property type="term" value="P:DNA replication"/>
    <property type="evidence" value="ECO:0007669"/>
    <property type="project" value="UniProtKB-UniRule"/>
</dbReference>
<dbReference type="GO" id="GO:0007062">
    <property type="term" value="P:sister chromatid cohesion"/>
    <property type="evidence" value="ECO:0007669"/>
    <property type="project" value="InterPro"/>
</dbReference>
<dbReference type="CDD" id="cd03278">
    <property type="entry name" value="ABC_SMC_barmotin"/>
    <property type="match status" value="2"/>
</dbReference>
<dbReference type="FunFam" id="3.40.50.300:FF:000901">
    <property type="entry name" value="Chromosome partition protein Smc"/>
    <property type="match status" value="1"/>
</dbReference>
<dbReference type="FunFam" id="3.40.50.300:FF:000984">
    <property type="entry name" value="Chromosome partition protein Smc"/>
    <property type="match status" value="1"/>
</dbReference>
<dbReference type="Gene3D" id="1.20.1060.20">
    <property type="match status" value="1"/>
</dbReference>
<dbReference type="Gene3D" id="3.30.70.1620">
    <property type="match status" value="1"/>
</dbReference>
<dbReference type="Gene3D" id="3.40.50.300">
    <property type="entry name" value="P-loop containing nucleotide triphosphate hydrolases"/>
    <property type="match status" value="2"/>
</dbReference>
<dbReference type="HAMAP" id="MF_01894">
    <property type="entry name" value="Smc_prok"/>
    <property type="match status" value="1"/>
</dbReference>
<dbReference type="InterPro" id="IPR027417">
    <property type="entry name" value="P-loop_NTPase"/>
</dbReference>
<dbReference type="InterPro" id="IPR003395">
    <property type="entry name" value="RecF/RecN/SMC_N"/>
</dbReference>
<dbReference type="InterPro" id="IPR024704">
    <property type="entry name" value="SMC"/>
</dbReference>
<dbReference type="InterPro" id="IPR010935">
    <property type="entry name" value="SMC_hinge"/>
</dbReference>
<dbReference type="InterPro" id="IPR036277">
    <property type="entry name" value="SMC_hinge_sf"/>
</dbReference>
<dbReference type="InterPro" id="IPR011890">
    <property type="entry name" value="SMC_prok"/>
</dbReference>
<dbReference type="NCBIfam" id="TIGR02168">
    <property type="entry name" value="SMC_prok_B"/>
    <property type="match status" value="1"/>
</dbReference>
<dbReference type="PANTHER" id="PTHR43977">
    <property type="entry name" value="STRUCTURAL MAINTENANCE OF CHROMOSOMES PROTEIN 3"/>
    <property type="match status" value="1"/>
</dbReference>
<dbReference type="Pfam" id="PF06470">
    <property type="entry name" value="SMC_hinge"/>
    <property type="match status" value="1"/>
</dbReference>
<dbReference type="Pfam" id="PF02463">
    <property type="entry name" value="SMC_N"/>
    <property type="match status" value="1"/>
</dbReference>
<dbReference type="PIRSF" id="PIRSF005719">
    <property type="entry name" value="SMC"/>
    <property type="match status" value="1"/>
</dbReference>
<dbReference type="SMART" id="SM00968">
    <property type="entry name" value="SMC_hinge"/>
    <property type="match status" value="1"/>
</dbReference>
<dbReference type="SUPFAM" id="SSF52540">
    <property type="entry name" value="P-loop containing nucleoside triphosphate hydrolases"/>
    <property type="match status" value="1"/>
</dbReference>
<dbReference type="SUPFAM" id="SSF75553">
    <property type="entry name" value="Smc hinge domain"/>
    <property type="match status" value="1"/>
</dbReference>
<accession>P9WGF3</accession>
<accession>L0TCM4</accession>
<accession>Q10970</accession>
<organism>
    <name type="scientific">Mycobacterium tuberculosis (strain ATCC 25618 / H37Rv)</name>
    <dbReference type="NCBI Taxonomy" id="83332"/>
    <lineage>
        <taxon>Bacteria</taxon>
        <taxon>Bacillati</taxon>
        <taxon>Actinomycetota</taxon>
        <taxon>Actinomycetes</taxon>
        <taxon>Mycobacteriales</taxon>
        <taxon>Mycobacteriaceae</taxon>
        <taxon>Mycobacterium</taxon>
        <taxon>Mycobacterium tuberculosis complex</taxon>
    </lineage>
</organism>
<keyword id="KW-0067">ATP-binding</keyword>
<keyword id="KW-0175">Coiled coil</keyword>
<keyword id="KW-0963">Cytoplasm</keyword>
<keyword id="KW-0238">DNA-binding</keyword>
<keyword id="KW-0547">Nucleotide-binding</keyword>
<keyword id="KW-1185">Reference proteome</keyword>
<gene>
    <name evidence="1" type="primary">smc</name>
    <name type="ordered locus">Rv2922c</name>
    <name type="ORF">MTCY338.11c</name>
</gene>
<feature type="chain" id="PRO_0000119030" description="Chromosome partition protein Smc">
    <location>
        <begin position="1"/>
        <end position="1205"/>
    </location>
</feature>
<feature type="domain" description="SMC hinge">
    <location>
        <begin position="514"/>
        <end position="628"/>
    </location>
</feature>
<feature type="coiled-coil region" evidence="1">
    <location>
        <begin position="169"/>
        <end position="288"/>
    </location>
</feature>
<feature type="coiled-coil region" evidence="1">
    <location>
        <begin position="330"/>
        <end position="499"/>
    </location>
</feature>
<feature type="coiled-coil region" evidence="1">
    <location>
        <begin position="661"/>
        <end position="771"/>
    </location>
</feature>
<feature type="coiled-coil region" evidence="1">
    <location>
        <begin position="802"/>
        <end position="836"/>
    </location>
</feature>
<feature type="coiled-coil region" evidence="1">
    <location>
        <begin position="979"/>
        <end position="1033"/>
    </location>
</feature>
<feature type="binding site" evidence="1">
    <location>
        <begin position="32"/>
        <end position="39"/>
    </location>
    <ligand>
        <name>ATP</name>
        <dbReference type="ChEBI" id="CHEBI:30616"/>
    </ligand>
</feature>
<reference key="1">
    <citation type="journal article" date="2004" name="Mol. Biol. Evol.">
        <title>The evolution of SMC proteins: phylogenetic analysis and structural implications.</title>
        <authorList>
            <person name="Cobbe N."/>
            <person name="Heck M.M.S."/>
        </authorList>
    </citation>
    <scope>NUCLEOTIDE SEQUENCE [GENOMIC DNA]</scope>
    <source>
        <strain>ATCC 25618 / H37Rv</strain>
    </source>
</reference>
<reference key="2">
    <citation type="journal article" date="1998" name="Nature">
        <title>Deciphering the biology of Mycobacterium tuberculosis from the complete genome sequence.</title>
        <authorList>
            <person name="Cole S.T."/>
            <person name="Brosch R."/>
            <person name="Parkhill J."/>
            <person name="Garnier T."/>
            <person name="Churcher C.M."/>
            <person name="Harris D.E."/>
            <person name="Gordon S.V."/>
            <person name="Eiglmeier K."/>
            <person name="Gas S."/>
            <person name="Barry C.E. III"/>
            <person name="Tekaia F."/>
            <person name="Badcock K."/>
            <person name="Basham D."/>
            <person name="Brown D."/>
            <person name="Chillingworth T."/>
            <person name="Connor R."/>
            <person name="Davies R.M."/>
            <person name="Devlin K."/>
            <person name="Feltwell T."/>
            <person name="Gentles S."/>
            <person name="Hamlin N."/>
            <person name="Holroyd S."/>
            <person name="Hornsby T."/>
            <person name="Jagels K."/>
            <person name="Krogh A."/>
            <person name="McLean J."/>
            <person name="Moule S."/>
            <person name="Murphy L.D."/>
            <person name="Oliver S."/>
            <person name="Osborne J."/>
            <person name="Quail M.A."/>
            <person name="Rajandream M.A."/>
            <person name="Rogers J."/>
            <person name="Rutter S."/>
            <person name="Seeger K."/>
            <person name="Skelton S."/>
            <person name="Squares S."/>
            <person name="Squares R."/>
            <person name="Sulston J.E."/>
            <person name="Taylor K."/>
            <person name="Whitehead S."/>
            <person name="Barrell B.G."/>
        </authorList>
    </citation>
    <scope>NUCLEOTIDE SEQUENCE [LARGE SCALE GENOMIC DNA]</scope>
    <source>
        <strain>ATCC 25618 / H37Rv</strain>
    </source>
</reference>
<reference key="3">
    <citation type="journal article" date="2011" name="Mol. Cell. Proteomics">
        <title>Proteogenomic analysis of Mycobacterium tuberculosis by high resolution mass spectrometry.</title>
        <authorList>
            <person name="Kelkar D.S."/>
            <person name="Kumar D."/>
            <person name="Kumar P."/>
            <person name="Balakrishnan L."/>
            <person name="Muthusamy B."/>
            <person name="Yadav A.K."/>
            <person name="Shrivastava P."/>
            <person name="Marimuthu A."/>
            <person name="Anand S."/>
            <person name="Sundaram H."/>
            <person name="Kingsbury R."/>
            <person name="Harsha H.C."/>
            <person name="Nair B."/>
            <person name="Prasad T.S."/>
            <person name="Chauhan D.S."/>
            <person name="Katoch K."/>
            <person name="Katoch V.M."/>
            <person name="Kumar P."/>
            <person name="Chaerkady R."/>
            <person name="Ramachandran S."/>
            <person name="Dash D."/>
            <person name="Pandey A."/>
        </authorList>
    </citation>
    <scope>IDENTIFICATION BY MASS SPECTROMETRY [LARGE SCALE ANALYSIS]</scope>
    <source>
        <strain>ATCC 25618 / H37Rv</strain>
    </source>
</reference>